<proteinExistence type="evidence at protein level"/>
<gene>
    <name evidence="1" type="primary">ppa</name>
</gene>
<protein>
    <recommendedName>
        <fullName evidence="1">Inorganic pyrophosphatase</fullName>
        <ecNumber evidence="1">3.6.1.1</ecNumber>
    </recommendedName>
    <alternativeName>
        <fullName evidence="1">Pyrophosphate phospho-hydrolase</fullName>
        <shortName evidence="1">PPase</shortName>
    </alternativeName>
</protein>
<name>IPYR_PSEAO</name>
<reference key="1">
    <citation type="journal article" date="2007" name="FEBS J.">
        <title>Comparative biochemical and functional studies of family I soluble inorganic pyrophosphatases from photosynthetic bacteria.</title>
        <authorList>
            <person name="Gomez-Garcia M.R."/>
            <person name="Losada M."/>
            <person name="Serrano A."/>
        </authorList>
    </citation>
    <scope>NUCLEOTIDE SEQUENCE [GENOMIC DNA]</scope>
    <scope>PROTEIN SEQUENCE OF 1-24</scope>
    <scope>CATALYTIC ACTIVITY</scope>
    <scope>COFACTOR</scope>
    <scope>BIOPHYSICOCHEMICAL PROPERTIES</scope>
    <scope>SUBUNIT</scope>
</reference>
<organism>
    <name type="scientific">Pseudanabaena sp. (strain PCC 6903)</name>
    <dbReference type="NCBI Taxonomy" id="102126"/>
    <lineage>
        <taxon>Bacteria</taxon>
        <taxon>Bacillati</taxon>
        <taxon>Cyanobacteriota</taxon>
        <taxon>Cyanophyceae</taxon>
        <taxon>Pseudanabaenales</taxon>
        <taxon>Pseudanabaenaceae</taxon>
        <taxon>Pseudanabaena</taxon>
    </lineage>
</organism>
<sequence>MDLSRIPPQPKAGILNVLIEIPAGSKNKYEFDKDLNAFALDRVLYSSVQYPYDYGFVPITNNLADDGDPLDGMVIMVPPTFPGVATARPIGMLQMVDGGDRDEKFLCVPAKDPRYTYVKSANDLAGHRLDEIFEFFRSYKNLFKKPTEFFGWKGDVAGLPLVEECVKNYYKTYCKNDHGK</sequence>
<dbReference type="EC" id="3.6.1.1" evidence="1"/>
<dbReference type="EMBL" id="AJ252205">
    <property type="protein sequence ID" value="CAC81006.1"/>
    <property type="molecule type" value="Genomic_DNA"/>
</dbReference>
<dbReference type="SMR" id="P58733"/>
<dbReference type="BRENDA" id="3.6.1.1">
    <property type="organism ID" value="5074"/>
</dbReference>
<dbReference type="SABIO-RK" id="P58733"/>
<dbReference type="GO" id="GO:0005737">
    <property type="term" value="C:cytoplasm"/>
    <property type="evidence" value="ECO:0007669"/>
    <property type="project" value="UniProtKB-SubCell"/>
</dbReference>
<dbReference type="GO" id="GO:0004427">
    <property type="term" value="F:inorganic diphosphate phosphatase activity"/>
    <property type="evidence" value="ECO:0007669"/>
    <property type="project" value="UniProtKB-UniRule"/>
</dbReference>
<dbReference type="GO" id="GO:0000287">
    <property type="term" value="F:magnesium ion binding"/>
    <property type="evidence" value="ECO:0007669"/>
    <property type="project" value="UniProtKB-UniRule"/>
</dbReference>
<dbReference type="GO" id="GO:0006796">
    <property type="term" value="P:phosphate-containing compound metabolic process"/>
    <property type="evidence" value="ECO:0007669"/>
    <property type="project" value="InterPro"/>
</dbReference>
<dbReference type="CDD" id="cd00412">
    <property type="entry name" value="pyrophosphatase"/>
    <property type="match status" value="1"/>
</dbReference>
<dbReference type="Gene3D" id="3.90.80.10">
    <property type="entry name" value="Inorganic pyrophosphatase"/>
    <property type="match status" value="1"/>
</dbReference>
<dbReference type="HAMAP" id="MF_00209">
    <property type="entry name" value="Inorganic_PPase"/>
    <property type="match status" value="1"/>
</dbReference>
<dbReference type="InterPro" id="IPR008162">
    <property type="entry name" value="Pyrophosphatase"/>
</dbReference>
<dbReference type="InterPro" id="IPR036649">
    <property type="entry name" value="Pyrophosphatase_sf"/>
</dbReference>
<dbReference type="PANTHER" id="PTHR10286">
    <property type="entry name" value="INORGANIC PYROPHOSPHATASE"/>
    <property type="match status" value="1"/>
</dbReference>
<dbReference type="Pfam" id="PF00719">
    <property type="entry name" value="Pyrophosphatase"/>
    <property type="match status" value="1"/>
</dbReference>
<dbReference type="SUPFAM" id="SSF50324">
    <property type="entry name" value="Inorganic pyrophosphatase"/>
    <property type="match status" value="1"/>
</dbReference>
<dbReference type="PROSITE" id="PS00387">
    <property type="entry name" value="PPASE"/>
    <property type="match status" value="1"/>
</dbReference>
<keyword id="KW-0963">Cytoplasm</keyword>
<keyword id="KW-0903">Direct protein sequencing</keyword>
<keyword id="KW-0378">Hydrolase</keyword>
<keyword id="KW-0460">Magnesium</keyword>
<keyword id="KW-0479">Metal-binding</keyword>
<feature type="chain" id="PRO_0000137519" description="Inorganic pyrophosphatase">
    <location>
        <begin position="1"/>
        <end position="180"/>
    </location>
</feature>
<feature type="binding site" evidence="1">
    <location>
        <position position="28"/>
    </location>
    <ligand>
        <name>substrate</name>
    </ligand>
</feature>
<feature type="binding site" evidence="1">
    <location>
        <position position="42"/>
    </location>
    <ligand>
        <name>substrate</name>
    </ligand>
</feature>
<feature type="binding site" evidence="1">
    <location>
        <position position="54"/>
    </location>
    <ligand>
        <name>substrate</name>
    </ligand>
</feature>
<feature type="binding site" evidence="1">
    <location>
        <position position="66"/>
    </location>
    <ligand>
        <name>Mg(2+)</name>
        <dbReference type="ChEBI" id="CHEBI:18420"/>
        <label>1</label>
    </ligand>
</feature>
<feature type="binding site" evidence="1">
    <location>
        <position position="71"/>
    </location>
    <ligand>
        <name>Mg(2+)</name>
        <dbReference type="ChEBI" id="CHEBI:18420"/>
        <label>1</label>
    </ligand>
</feature>
<feature type="binding site" evidence="1">
    <location>
        <position position="71"/>
    </location>
    <ligand>
        <name>Mg(2+)</name>
        <dbReference type="ChEBI" id="CHEBI:18420"/>
        <label>2</label>
    </ligand>
</feature>
<feature type="binding site" evidence="1">
    <location>
        <position position="102"/>
    </location>
    <ligand>
        <name>Mg(2+)</name>
        <dbReference type="ChEBI" id="CHEBI:18420"/>
        <label>1</label>
    </ligand>
</feature>
<feature type="binding site" evidence="1">
    <location>
        <position position="139"/>
    </location>
    <ligand>
        <name>substrate</name>
    </ligand>
</feature>
<comment type="function">
    <text>Hydrolyzes PPi generated in anabolic reactions.</text>
</comment>
<comment type="function">
    <text evidence="1">Catalyzes the hydrolysis of inorganic pyrophosphate (PPi) forming two phosphate ions.</text>
</comment>
<comment type="catalytic activity">
    <reaction evidence="1 2">
        <text>diphosphate + H2O = 2 phosphate + H(+)</text>
        <dbReference type="Rhea" id="RHEA:24576"/>
        <dbReference type="ChEBI" id="CHEBI:15377"/>
        <dbReference type="ChEBI" id="CHEBI:15378"/>
        <dbReference type="ChEBI" id="CHEBI:33019"/>
        <dbReference type="ChEBI" id="CHEBI:43474"/>
        <dbReference type="EC" id="3.6.1.1"/>
    </reaction>
</comment>
<comment type="cofactor">
    <cofactor evidence="1 2">
        <name>Mg(2+)</name>
        <dbReference type="ChEBI" id="CHEBI:18420"/>
    </cofactor>
</comment>
<comment type="biophysicochemical properties">
    <kinetics>
        <KM evidence="2">2.9 uM for PPi</KM>
    </kinetics>
</comment>
<comment type="subunit">
    <text evidence="1 2">Homohexamer.</text>
</comment>
<comment type="subcellular location">
    <subcellularLocation>
        <location evidence="1">Cytoplasm</location>
    </subcellularLocation>
</comment>
<comment type="similarity">
    <text evidence="1">Belongs to the PPase family.</text>
</comment>
<accession>P58733</accession>
<accession>P80898</accession>
<evidence type="ECO:0000255" key="1">
    <source>
        <dbReference type="HAMAP-Rule" id="MF_00209"/>
    </source>
</evidence>
<evidence type="ECO:0000269" key="2">
    <source>
    </source>
</evidence>